<gene>
    <name type="primary">SLU7</name>
    <name type="ordered locus">CAALFM_C306770WA</name>
    <name type="ORF">CaO19.14119</name>
    <name type="ORF">CaO19.6827</name>
</gene>
<accession>Q5ADL4</accession>
<accession>A0A1D8PKP7</accession>
<name>SLU7_CANAL</name>
<keyword id="KW-0507">mRNA processing</keyword>
<keyword id="KW-0508">mRNA splicing</keyword>
<keyword id="KW-0539">Nucleus</keyword>
<keyword id="KW-1185">Reference proteome</keyword>
<keyword id="KW-0747">Spliceosome</keyword>
<sequence>MPKYQPKNGELNPYIPRYILETPRYQQDIINKSPEQEDAQDQTTTAHDPLAHQRKTGEIIDNSIAQSGTGIKDEFKGTIRVEENESYDSKRDRWYGYSTEEWLTHLKNWNDKKQSRKHASAQDNDDSDDTDYELELIELELDKKDMKKNIKKDPMEKMLRDRQDIPAYIYNITSNPNNKIRIEYDPKSRLAKDSAKGFLNKRNQFVKKLTGDGDELMKLQKMAQELDNEHEKDRKLAKLKQEFYGEENPKTVPQTDLSLSLEASPTLMMLKSKQLQNEKLAKSIQSKQEVMEKYNASTESDEKESKKTGHLEDKLFLNHKYIYGSYYENGKWGYKCCKQFDKNSRCTATD</sequence>
<organism>
    <name type="scientific">Candida albicans (strain SC5314 / ATCC MYA-2876)</name>
    <name type="common">Yeast</name>
    <dbReference type="NCBI Taxonomy" id="237561"/>
    <lineage>
        <taxon>Eukaryota</taxon>
        <taxon>Fungi</taxon>
        <taxon>Dikarya</taxon>
        <taxon>Ascomycota</taxon>
        <taxon>Saccharomycotina</taxon>
        <taxon>Pichiomycetes</taxon>
        <taxon>Debaryomycetaceae</taxon>
        <taxon>Candida/Lodderomyces clade</taxon>
        <taxon>Candida</taxon>
    </lineage>
</organism>
<evidence type="ECO:0000250" key="1"/>
<evidence type="ECO:0000256" key="2">
    <source>
        <dbReference type="SAM" id="MobiDB-lite"/>
    </source>
</evidence>
<evidence type="ECO:0000305" key="3"/>
<proteinExistence type="inferred from homology"/>
<dbReference type="EMBL" id="CP017625">
    <property type="protein sequence ID" value="AOW28683.1"/>
    <property type="molecule type" value="Genomic_DNA"/>
</dbReference>
<dbReference type="RefSeq" id="XP_719919.1">
    <property type="nucleotide sequence ID" value="XM_714826.1"/>
</dbReference>
<dbReference type="FunCoup" id="Q5ADL4">
    <property type="interactions" value="525"/>
</dbReference>
<dbReference type="STRING" id="237561.Q5ADL4"/>
<dbReference type="EnsemblFungi" id="C3_06770W_A-T">
    <property type="protein sequence ID" value="C3_06770W_A-T-p1"/>
    <property type="gene ID" value="C3_06770W_A"/>
</dbReference>
<dbReference type="GeneID" id="3638501"/>
<dbReference type="KEGG" id="cal:CAALFM_C306770WA"/>
<dbReference type="CGD" id="CAL0000178025">
    <property type="gene designation" value="SLU7"/>
</dbReference>
<dbReference type="VEuPathDB" id="FungiDB:C3_06770W_A"/>
<dbReference type="eggNOG" id="KOG2560">
    <property type="taxonomic scope" value="Eukaryota"/>
</dbReference>
<dbReference type="HOGENOM" id="CLU_019317_3_0_1"/>
<dbReference type="InParanoid" id="Q5ADL4"/>
<dbReference type="OMA" id="PTLMMMK"/>
<dbReference type="OrthoDB" id="249612at2759"/>
<dbReference type="PRO" id="PR:Q5ADL4"/>
<dbReference type="Proteomes" id="UP000000559">
    <property type="component" value="Chromosome 3"/>
</dbReference>
<dbReference type="GO" id="GO:0005681">
    <property type="term" value="C:spliceosomal complex"/>
    <property type="evidence" value="ECO:0000318"/>
    <property type="project" value="GO_Central"/>
</dbReference>
<dbReference type="GO" id="GO:0030628">
    <property type="term" value="F:pre-mRNA 3'-splice site binding"/>
    <property type="evidence" value="ECO:0007669"/>
    <property type="project" value="InterPro"/>
</dbReference>
<dbReference type="GO" id="GO:0000398">
    <property type="term" value="P:mRNA splicing, via spliceosome"/>
    <property type="evidence" value="ECO:0007669"/>
    <property type="project" value="InterPro"/>
</dbReference>
<dbReference type="GO" id="GO:0008380">
    <property type="term" value="P:RNA splicing"/>
    <property type="evidence" value="ECO:0000318"/>
    <property type="project" value="GO_Central"/>
</dbReference>
<dbReference type="InterPro" id="IPR021715">
    <property type="entry name" value="Slu7_dom"/>
</dbReference>
<dbReference type="InterPro" id="IPR039974">
    <property type="entry name" value="Splicing_factor_SLU7"/>
</dbReference>
<dbReference type="PANTHER" id="PTHR12942:SF2">
    <property type="entry name" value="PRE-MRNA-SPLICING FACTOR SLU7"/>
    <property type="match status" value="1"/>
</dbReference>
<dbReference type="PANTHER" id="PTHR12942">
    <property type="entry name" value="STEP II SPLICING FACTOR SLU7"/>
    <property type="match status" value="1"/>
</dbReference>
<dbReference type="Pfam" id="PF11708">
    <property type="entry name" value="Slu7"/>
    <property type="match status" value="1"/>
</dbReference>
<feature type="chain" id="PRO_0000218544" description="Pre-mRNA-splicing factor SLU7">
    <location>
        <begin position="1"/>
        <end position="350"/>
    </location>
</feature>
<feature type="region of interest" description="Disordered" evidence="2">
    <location>
        <begin position="28"/>
        <end position="58"/>
    </location>
</feature>
<feature type="compositionally biased region" description="Basic and acidic residues" evidence="2">
    <location>
        <begin position="49"/>
        <end position="58"/>
    </location>
</feature>
<protein>
    <recommendedName>
        <fullName>Pre-mRNA-splicing factor SLU7</fullName>
    </recommendedName>
</protein>
<reference key="1">
    <citation type="journal article" date="2004" name="Proc. Natl. Acad. Sci. U.S.A.">
        <title>The diploid genome sequence of Candida albicans.</title>
        <authorList>
            <person name="Jones T."/>
            <person name="Federspiel N.A."/>
            <person name="Chibana H."/>
            <person name="Dungan J."/>
            <person name="Kalman S."/>
            <person name="Magee B.B."/>
            <person name="Newport G."/>
            <person name="Thorstenson Y.R."/>
            <person name="Agabian N."/>
            <person name="Magee P.T."/>
            <person name="Davis R.W."/>
            <person name="Scherer S."/>
        </authorList>
    </citation>
    <scope>NUCLEOTIDE SEQUENCE [LARGE SCALE GENOMIC DNA]</scope>
    <source>
        <strain>SC5314 / ATCC MYA-2876</strain>
    </source>
</reference>
<reference key="2">
    <citation type="journal article" date="2007" name="Genome Biol.">
        <title>Assembly of the Candida albicans genome into sixteen supercontigs aligned on the eight chromosomes.</title>
        <authorList>
            <person name="van het Hoog M."/>
            <person name="Rast T.J."/>
            <person name="Martchenko M."/>
            <person name="Grindle S."/>
            <person name="Dignard D."/>
            <person name="Hogues H."/>
            <person name="Cuomo C."/>
            <person name="Berriman M."/>
            <person name="Scherer S."/>
            <person name="Magee B.B."/>
            <person name="Whiteway M."/>
            <person name="Chibana H."/>
            <person name="Nantel A."/>
            <person name="Magee P.T."/>
        </authorList>
    </citation>
    <scope>GENOME REANNOTATION</scope>
    <source>
        <strain>SC5314 / ATCC MYA-2876</strain>
    </source>
</reference>
<reference key="3">
    <citation type="journal article" date="2013" name="Genome Biol.">
        <title>Assembly of a phased diploid Candida albicans genome facilitates allele-specific measurements and provides a simple model for repeat and indel structure.</title>
        <authorList>
            <person name="Muzzey D."/>
            <person name="Schwartz K."/>
            <person name="Weissman J.S."/>
            <person name="Sherlock G."/>
        </authorList>
    </citation>
    <scope>NUCLEOTIDE SEQUENCE [LARGE SCALE GENOMIC DNA]</scope>
    <scope>GENOME REANNOTATION</scope>
    <source>
        <strain>SC5314 / ATCC MYA-2876</strain>
    </source>
</reference>
<comment type="function">
    <text evidence="1">Involved in pre-mRNA splicing.</text>
</comment>
<comment type="subunit">
    <text evidence="1">Associated with the spliceosome.</text>
</comment>
<comment type="subcellular location">
    <subcellularLocation>
        <location evidence="1">Nucleus</location>
    </subcellularLocation>
</comment>
<comment type="similarity">
    <text evidence="3">Belongs to the SLU7 family.</text>
</comment>